<keyword id="KW-0687">Ribonucleoprotein</keyword>
<keyword id="KW-0689">Ribosomal protein</keyword>
<keyword id="KW-0694">RNA-binding</keyword>
<keyword id="KW-0699">rRNA-binding</keyword>
<organism>
    <name type="scientific">Thermosipho melanesiensis (strain DSM 12029 / CIP 104789 / BI429)</name>
    <dbReference type="NCBI Taxonomy" id="391009"/>
    <lineage>
        <taxon>Bacteria</taxon>
        <taxon>Thermotogati</taxon>
        <taxon>Thermotogota</taxon>
        <taxon>Thermotogae</taxon>
        <taxon>Thermotogales</taxon>
        <taxon>Fervidobacteriaceae</taxon>
        <taxon>Thermosipho</taxon>
    </lineage>
</organism>
<accession>A6LLL6</accession>
<feature type="chain" id="PRO_1000051956" description="Large ribosomal subunit protein uL2">
    <location>
        <begin position="1"/>
        <end position="274"/>
    </location>
</feature>
<feature type="region of interest" description="Disordered" evidence="2">
    <location>
        <begin position="222"/>
        <end position="274"/>
    </location>
</feature>
<feature type="compositionally biased region" description="Basic and acidic residues" evidence="2">
    <location>
        <begin position="229"/>
        <end position="239"/>
    </location>
</feature>
<protein>
    <recommendedName>
        <fullName evidence="1">Large ribosomal subunit protein uL2</fullName>
    </recommendedName>
    <alternativeName>
        <fullName evidence="3">50S ribosomal protein L2</fullName>
    </alternativeName>
</protein>
<proteinExistence type="inferred from homology"/>
<sequence>MGLKRFKPTSPARRQMIIPDFSEITKKEPEKSLIAPLKKTGGRNSYGRVTVRFRGGGHKRKYRIIDFKRDKVGIPAKVVSIEYDPNRTARIALLVYADGEKRYILAPQDLNVGDMVMNGPDAEIKPGNALPLENIPVGTVIHNVEYIPGKGGQIARSAGTSCQLMAKEGKYALLRMPSGELRKVPVKCYATIGVVGNEDHKNEVDGKAGRVRWKGRKPHVRGVAMNPVDHPHGGGEGRGKGHHPQSPWGQLAKGYKTRRGKKASDKLIVRRRNG</sequence>
<evidence type="ECO:0000255" key="1">
    <source>
        <dbReference type="HAMAP-Rule" id="MF_01320"/>
    </source>
</evidence>
<evidence type="ECO:0000256" key="2">
    <source>
        <dbReference type="SAM" id="MobiDB-lite"/>
    </source>
</evidence>
<evidence type="ECO:0000305" key="3"/>
<gene>
    <name evidence="1" type="primary">rplB</name>
    <name type="ordered locus">Tmel_0956</name>
</gene>
<reference key="1">
    <citation type="submission" date="2007-05" db="EMBL/GenBank/DDBJ databases">
        <title>Complete sequence of Thermosipho melanesiensis BI429.</title>
        <authorList>
            <consortium name="US DOE Joint Genome Institute"/>
            <person name="Copeland A."/>
            <person name="Lucas S."/>
            <person name="Lapidus A."/>
            <person name="Barry K."/>
            <person name="Glavina del Rio T."/>
            <person name="Dalin E."/>
            <person name="Tice H."/>
            <person name="Pitluck S."/>
            <person name="Chertkov O."/>
            <person name="Brettin T."/>
            <person name="Bruce D."/>
            <person name="Detter J.C."/>
            <person name="Han C."/>
            <person name="Schmutz J."/>
            <person name="Larimer F."/>
            <person name="Land M."/>
            <person name="Hauser L."/>
            <person name="Kyrpides N."/>
            <person name="Mikhailova N."/>
            <person name="Nelson K."/>
            <person name="Gogarten J.P."/>
            <person name="Noll K."/>
            <person name="Richardson P."/>
        </authorList>
    </citation>
    <scope>NUCLEOTIDE SEQUENCE [LARGE SCALE GENOMIC DNA]</scope>
    <source>
        <strain>DSM 12029 / CIP 104789 / BI429</strain>
    </source>
</reference>
<name>RL2_THEM4</name>
<dbReference type="EMBL" id="CP000716">
    <property type="protein sequence ID" value="ABR30817.1"/>
    <property type="molecule type" value="Genomic_DNA"/>
</dbReference>
<dbReference type="RefSeq" id="WP_012057178.1">
    <property type="nucleotide sequence ID" value="NC_009616.1"/>
</dbReference>
<dbReference type="SMR" id="A6LLL6"/>
<dbReference type="STRING" id="391009.Tmel_0956"/>
<dbReference type="KEGG" id="tme:Tmel_0956"/>
<dbReference type="eggNOG" id="COG0090">
    <property type="taxonomic scope" value="Bacteria"/>
</dbReference>
<dbReference type="HOGENOM" id="CLU_036235_2_1_0"/>
<dbReference type="OrthoDB" id="9778722at2"/>
<dbReference type="Proteomes" id="UP000001110">
    <property type="component" value="Chromosome"/>
</dbReference>
<dbReference type="GO" id="GO:0015934">
    <property type="term" value="C:large ribosomal subunit"/>
    <property type="evidence" value="ECO:0007669"/>
    <property type="project" value="InterPro"/>
</dbReference>
<dbReference type="GO" id="GO:0019843">
    <property type="term" value="F:rRNA binding"/>
    <property type="evidence" value="ECO:0007669"/>
    <property type="project" value="UniProtKB-UniRule"/>
</dbReference>
<dbReference type="GO" id="GO:0003735">
    <property type="term" value="F:structural constituent of ribosome"/>
    <property type="evidence" value="ECO:0007669"/>
    <property type="project" value="InterPro"/>
</dbReference>
<dbReference type="GO" id="GO:0016740">
    <property type="term" value="F:transferase activity"/>
    <property type="evidence" value="ECO:0007669"/>
    <property type="project" value="InterPro"/>
</dbReference>
<dbReference type="GO" id="GO:0002181">
    <property type="term" value="P:cytoplasmic translation"/>
    <property type="evidence" value="ECO:0007669"/>
    <property type="project" value="TreeGrafter"/>
</dbReference>
<dbReference type="FunFam" id="2.30.30.30:FF:000001">
    <property type="entry name" value="50S ribosomal protein L2"/>
    <property type="match status" value="1"/>
</dbReference>
<dbReference type="FunFam" id="2.40.50.140:FF:000003">
    <property type="entry name" value="50S ribosomal protein L2"/>
    <property type="match status" value="1"/>
</dbReference>
<dbReference type="FunFam" id="4.10.950.10:FF:000001">
    <property type="entry name" value="50S ribosomal protein L2"/>
    <property type="match status" value="1"/>
</dbReference>
<dbReference type="Gene3D" id="2.30.30.30">
    <property type="match status" value="1"/>
</dbReference>
<dbReference type="Gene3D" id="2.40.50.140">
    <property type="entry name" value="Nucleic acid-binding proteins"/>
    <property type="match status" value="1"/>
</dbReference>
<dbReference type="Gene3D" id="4.10.950.10">
    <property type="entry name" value="Ribosomal protein L2, domain 3"/>
    <property type="match status" value="1"/>
</dbReference>
<dbReference type="HAMAP" id="MF_01320_B">
    <property type="entry name" value="Ribosomal_uL2_B"/>
    <property type="match status" value="1"/>
</dbReference>
<dbReference type="InterPro" id="IPR012340">
    <property type="entry name" value="NA-bd_OB-fold"/>
</dbReference>
<dbReference type="InterPro" id="IPR014722">
    <property type="entry name" value="Rib_uL2_dom2"/>
</dbReference>
<dbReference type="InterPro" id="IPR002171">
    <property type="entry name" value="Ribosomal_uL2"/>
</dbReference>
<dbReference type="InterPro" id="IPR005880">
    <property type="entry name" value="Ribosomal_uL2_bac/org-type"/>
</dbReference>
<dbReference type="InterPro" id="IPR022669">
    <property type="entry name" value="Ribosomal_uL2_C"/>
</dbReference>
<dbReference type="InterPro" id="IPR022671">
    <property type="entry name" value="Ribosomal_uL2_CS"/>
</dbReference>
<dbReference type="InterPro" id="IPR014726">
    <property type="entry name" value="Ribosomal_uL2_dom3"/>
</dbReference>
<dbReference type="InterPro" id="IPR022666">
    <property type="entry name" value="Ribosomal_uL2_RNA-bd_dom"/>
</dbReference>
<dbReference type="InterPro" id="IPR008991">
    <property type="entry name" value="Translation_prot_SH3-like_sf"/>
</dbReference>
<dbReference type="NCBIfam" id="TIGR01171">
    <property type="entry name" value="rplB_bact"/>
    <property type="match status" value="1"/>
</dbReference>
<dbReference type="PANTHER" id="PTHR13691:SF5">
    <property type="entry name" value="LARGE RIBOSOMAL SUBUNIT PROTEIN UL2M"/>
    <property type="match status" value="1"/>
</dbReference>
<dbReference type="PANTHER" id="PTHR13691">
    <property type="entry name" value="RIBOSOMAL PROTEIN L2"/>
    <property type="match status" value="1"/>
</dbReference>
<dbReference type="Pfam" id="PF00181">
    <property type="entry name" value="Ribosomal_L2"/>
    <property type="match status" value="1"/>
</dbReference>
<dbReference type="Pfam" id="PF03947">
    <property type="entry name" value="Ribosomal_L2_C"/>
    <property type="match status" value="1"/>
</dbReference>
<dbReference type="PIRSF" id="PIRSF002158">
    <property type="entry name" value="Ribosomal_L2"/>
    <property type="match status" value="1"/>
</dbReference>
<dbReference type="SMART" id="SM01383">
    <property type="entry name" value="Ribosomal_L2"/>
    <property type="match status" value="1"/>
</dbReference>
<dbReference type="SMART" id="SM01382">
    <property type="entry name" value="Ribosomal_L2_C"/>
    <property type="match status" value="1"/>
</dbReference>
<dbReference type="SUPFAM" id="SSF50249">
    <property type="entry name" value="Nucleic acid-binding proteins"/>
    <property type="match status" value="1"/>
</dbReference>
<dbReference type="SUPFAM" id="SSF50104">
    <property type="entry name" value="Translation proteins SH3-like domain"/>
    <property type="match status" value="1"/>
</dbReference>
<dbReference type="PROSITE" id="PS00467">
    <property type="entry name" value="RIBOSOMAL_L2"/>
    <property type="match status" value="1"/>
</dbReference>
<comment type="function">
    <text evidence="1">One of the primary rRNA binding proteins. Required for association of the 30S and 50S subunits to form the 70S ribosome, for tRNA binding and peptide bond formation. It has been suggested to have peptidyltransferase activity; this is somewhat controversial. Makes several contacts with the 16S rRNA in the 70S ribosome.</text>
</comment>
<comment type="subunit">
    <text evidence="1">Part of the 50S ribosomal subunit. Forms a bridge to the 30S subunit in the 70S ribosome.</text>
</comment>
<comment type="similarity">
    <text evidence="1">Belongs to the universal ribosomal protein uL2 family.</text>
</comment>